<name>NUBCD_GEOSL</name>
<proteinExistence type="inferred from homology"/>
<dbReference type="EC" id="7.1.1.-"/>
<dbReference type="EMBL" id="AE017180">
    <property type="protein sequence ID" value="AAR36834.1"/>
    <property type="molecule type" value="Genomic_DNA"/>
</dbReference>
<dbReference type="RefSeq" id="NP_954484.1">
    <property type="nucleotide sequence ID" value="NC_002939.5"/>
</dbReference>
<dbReference type="RefSeq" id="WP_010944054.1">
    <property type="nucleotide sequence ID" value="NC_002939.5"/>
</dbReference>
<dbReference type="SMR" id="Q746S4"/>
<dbReference type="FunCoup" id="Q746S4">
    <property type="interactions" value="390"/>
</dbReference>
<dbReference type="STRING" id="243231.GSU3444"/>
<dbReference type="EnsemblBacteria" id="AAR36834">
    <property type="protein sequence ID" value="AAR36834"/>
    <property type="gene ID" value="GSU3444"/>
</dbReference>
<dbReference type="KEGG" id="gsu:GSU3444"/>
<dbReference type="PATRIC" id="fig|243231.5.peg.3466"/>
<dbReference type="eggNOG" id="COG0377">
    <property type="taxonomic scope" value="Bacteria"/>
</dbReference>
<dbReference type="eggNOG" id="COG0649">
    <property type="taxonomic scope" value="Bacteria"/>
</dbReference>
<dbReference type="eggNOG" id="COG0852">
    <property type="taxonomic scope" value="Bacteria"/>
</dbReference>
<dbReference type="HOGENOM" id="CLU_015134_5_0_7"/>
<dbReference type="InParanoid" id="Q746S4"/>
<dbReference type="OrthoDB" id="9801496at2"/>
<dbReference type="Proteomes" id="UP000000577">
    <property type="component" value="Chromosome"/>
</dbReference>
<dbReference type="GO" id="GO:0005886">
    <property type="term" value="C:plasma membrane"/>
    <property type="evidence" value="ECO:0000318"/>
    <property type="project" value="GO_Central"/>
</dbReference>
<dbReference type="GO" id="GO:0051539">
    <property type="term" value="F:4 iron, 4 sulfur cluster binding"/>
    <property type="evidence" value="ECO:0007669"/>
    <property type="project" value="InterPro"/>
</dbReference>
<dbReference type="GO" id="GO:0005506">
    <property type="term" value="F:iron ion binding"/>
    <property type="evidence" value="ECO:0007669"/>
    <property type="project" value="UniProtKB-UniRule"/>
</dbReference>
<dbReference type="GO" id="GO:0051287">
    <property type="term" value="F:NAD binding"/>
    <property type="evidence" value="ECO:0007669"/>
    <property type="project" value="InterPro"/>
</dbReference>
<dbReference type="GO" id="GO:0008137">
    <property type="term" value="F:NADH dehydrogenase (ubiquinone) activity"/>
    <property type="evidence" value="ECO:0007669"/>
    <property type="project" value="InterPro"/>
</dbReference>
<dbReference type="GO" id="GO:0050136">
    <property type="term" value="F:NADH:ubiquinone reductase (non-electrogenic) activity"/>
    <property type="evidence" value="ECO:0007669"/>
    <property type="project" value="UniProtKB-UniRule"/>
</dbReference>
<dbReference type="GO" id="GO:0048038">
    <property type="term" value="F:quinone binding"/>
    <property type="evidence" value="ECO:0007669"/>
    <property type="project" value="UniProtKB-KW"/>
</dbReference>
<dbReference type="FunFam" id="3.40.50.12280:FF:000002">
    <property type="entry name" value="NADH-quinone oxidoreductase subunit B"/>
    <property type="match status" value="1"/>
</dbReference>
<dbReference type="Gene3D" id="3.40.50.12280">
    <property type="match status" value="1"/>
</dbReference>
<dbReference type="Gene3D" id="1.10.645.10">
    <property type="entry name" value="Cytochrome-c3 Hydrogenase, chain B"/>
    <property type="match status" value="1"/>
</dbReference>
<dbReference type="Gene3D" id="3.30.460.80">
    <property type="entry name" value="NADH:ubiquinone oxidoreductase, 30kDa subunit"/>
    <property type="match status" value="1"/>
</dbReference>
<dbReference type="HAMAP" id="MF_01356">
    <property type="entry name" value="NDH1_NuoB"/>
    <property type="match status" value="1"/>
</dbReference>
<dbReference type="HAMAP" id="MF_01357">
    <property type="entry name" value="NDH1_NuoC"/>
    <property type="match status" value="1"/>
</dbReference>
<dbReference type="HAMAP" id="MF_01358">
    <property type="entry name" value="NDH1_NuoD"/>
    <property type="match status" value="1"/>
</dbReference>
<dbReference type="InterPro" id="IPR010218">
    <property type="entry name" value="NADH_DH_suC"/>
</dbReference>
<dbReference type="InterPro" id="IPR001135">
    <property type="entry name" value="NADH_Q_OxRdtase_suD"/>
</dbReference>
<dbReference type="InterPro" id="IPR037232">
    <property type="entry name" value="NADH_quin_OxRdtase_su_C/D-like"/>
</dbReference>
<dbReference type="InterPro" id="IPR006137">
    <property type="entry name" value="NADH_UbQ_OxRdtase-like_20kDa"/>
</dbReference>
<dbReference type="InterPro" id="IPR001268">
    <property type="entry name" value="NADH_UbQ_OxRdtase_30kDa_su"/>
</dbReference>
<dbReference type="InterPro" id="IPR014029">
    <property type="entry name" value="NADH_UbQ_OxRdtase_49kDa_CS"/>
</dbReference>
<dbReference type="InterPro" id="IPR020396">
    <property type="entry name" value="NADH_UbQ_OxRdtase_CS"/>
</dbReference>
<dbReference type="InterPro" id="IPR006138">
    <property type="entry name" value="NADH_UQ_OxRdtase_20Kd_su"/>
</dbReference>
<dbReference type="InterPro" id="IPR022885">
    <property type="entry name" value="NDH1_su_D/H"/>
</dbReference>
<dbReference type="InterPro" id="IPR029014">
    <property type="entry name" value="NiFe-Hase_large"/>
</dbReference>
<dbReference type="NCBIfam" id="TIGR01957">
    <property type="entry name" value="nuoB_fam"/>
    <property type="match status" value="1"/>
</dbReference>
<dbReference type="NCBIfam" id="TIGR01962">
    <property type="entry name" value="NuoD"/>
    <property type="match status" value="1"/>
</dbReference>
<dbReference type="NCBIfam" id="NF004739">
    <property type="entry name" value="PRK06075.1"/>
    <property type="match status" value="1"/>
</dbReference>
<dbReference type="NCBIfam" id="NF005012">
    <property type="entry name" value="PRK06411.1"/>
    <property type="match status" value="1"/>
</dbReference>
<dbReference type="NCBIfam" id="NF009808">
    <property type="entry name" value="PRK13292.1"/>
    <property type="match status" value="1"/>
</dbReference>
<dbReference type="PANTHER" id="PTHR11993:SF45">
    <property type="entry name" value="NADH-QUINONE OXIDOREDUCTASE SUBUNIT C_D"/>
    <property type="match status" value="1"/>
</dbReference>
<dbReference type="PANTHER" id="PTHR11993">
    <property type="entry name" value="NADH-UBIQUINONE OXIDOREDUCTASE 49 KDA SUBUNIT"/>
    <property type="match status" value="1"/>
</dbReference>
<dbReference type="Pfam" id="PF00329">
    <property type="entry name" value="Complex1_30kDa"/>
    <property type="match status" value="1"/>
</dbReference>
<dbReference type="Pfam" id="PF00346">
    <property type="entry name" value="Complex1_49kDa"/>
    <property type="match status" value="1"/>
</dbReference>
<dbReference type="Pfam" id="PF01058">
    <property type="entry name" value="Oxidored_q6"/>
    <property type="match status" value="1"/>
</dbReference>
<dbReference type="SUPFAM" id="SSF56770">
    <property type="entry name" value="HydA/Nqo6-like"/>
    <property type="match status" value="1"/>
</dbReference>
<dbReference type="SUPFAM" id="SSF56762">
    <property type="entry name" value="HydB/Nqo4-like"/>
    <property type="match status" value="1"/>
</dbReference>
<dbReference type="SUPFAM" id="SSF143243">
    <property type="entry name" value="Nqo5-like"/>
    <property type="match status" value="1"/>
</dbReference>
<dbReference type="PROSITE" id="PS00542">
    <property type="entry name" value="COMPLEX1_30K"/>
    <property type="match status" value="1"/>
</dbReference>
<dbReference type="PROSITE" id="PS00535">
    <property type="entry name" value="COMPLEX1_49K"/>
    <property type="match status" value="1"/>
</dbReference>
<organism>
    <name type="scientific">Geobacter sulfurreducens (strain ATCC 51573 / DSM 12127 / PCA)</name>
    <dbReference type="NCBI Taxonomy" id="243231"/>
    <lineage>
        <taxon>Bacteria</taxon>
        <taxon>Pseudomonadati</taxon>
        <taxon>Thermodesulfobacteriota</taxon>
        <taxon>Desulfuromonadia</taxon>
        <taxon>Geobacterales</taxon>
        <taxon>Geobacteraceae</taxon>
        <taxon>Geobacter</taxon>
    </lineage>
</organism>
<comment type="function">
    <text evidence="1">NDH-1 shuttles electrons from NADH, via FMN and iron-sulfur (Fe-S) centers, to quinones in the respiratory chain. The immediate electron acceptor for the enzyme in this species is believed to be ubiquinone. Couples the redox reaction to proton translocation (for every two electrons transferred, four hydrogen ions are translocated across the cytoplasmic membrane), and thus conserves the redox energy in a proton gradient.</text>
</comment>
<comment type="catalytic activity">
    <reaction>
        <text>a quinone + NADH + 5 H(+)(in) = a quinol + NAD(+) + 4 H(+)(out)</text>
        <dbReference type="Rhea" id="RHEA:57888"/>
        <dbReference type="ChEBI" id="CHEBI:15378"/>
        <dbReference type="ChEBI" id="CHEBI:24646"/>
        <dbReference type="ChEBI" id="CHEBI:57540"/>
        <dbReference type="ChEBI" id="CHEBI:57945"/>
        <dbReference type="ChEBI" id="CHEBI:132124"/>
    </reaction>
</comment>
<comment type="subunit">
    <text evidence="1">NDH-1 is composed of about 13 different subunits. Subunits NuoBCD, E, F, and G constitute the peripheral sector of the complex (By similarity).</text>
</comment>
<comment type="subcellular location">
    <subcellularLocation>
        <location evidence="1">Cell inner membrane</location>
        <topology evidence="1">Peripheral membrane protein</topology>
        <orientation evidence="1">Cytoplasmic side</orientation>
    </subcellularLocation>
</comment>
<comment type="similarity">
    <text evidence="2">In the N-terminal section; belongs to the complex I 20 kDa subunit family.</text>
</comment>
<comment type="similarity">
    <text evidence="2">In the central section; belongs to the complex I 30 kDa subunit family.</text>
</comment>
<comment type="similarity">
    <text evidence="2">In the C-terminal section; belongs to the complex I 49 kDa subunit family.</text>
</comment>
<keyword id="KW-0997">Cell inner membrane</keyword>
<keyword id="KW-1003">Cell membrane</keyword>
<keyword id="KW-0472">Membrane</keyword>
<keyword id="KW-0511">Multifunctional enzyme</keyword>
<keyword id="KW-0520">NAD</keyword>
<keyword id="KW-0874">Quinone</keyword>
<keyword id="KW-1185">Reference proteome</keyword>
<keyword id="KW-1278">Translocase</keyword>
<keyword id="KW-0813">Transport</keyword>
<keyword id="KW-0830">Ubiquinone</keyword>
<gene>
    <name type="primary">nuoBCD</name>
    <name type="synonym">nuoB</name>
    <name type="synonym">nuoC</name>
    <name type="synonym">nuoD</name>
    <name type="ordered locus">GSU3444</name>
</gene>
<reference key="1">
    <citation type="journal article" date="2003" name="Science">
        <title>Genome of Geobacter sulfurreducens: metal reduction in subsurface environments.</title>
        <authorList>
            <person name="Methe B.A."/>
            <person name="Nelson K.E."/>
            <person name="Eisen J.A."/>
            <person name="Paulsen I.T."/>
            <person name="Nelson W.C."/>
            <person name="Heidelberg J.F."/>
            <person name="Wu D."/>
            <person name="Wu M."/>
            <person name="Ward N.L."/>
            <person name="Beanan M.J."/>
            <person name="Dodson R.J."/>
            <person name="Madupu R."/>
            <person name="Brinkac L.M."/>
            <person name="Daugherty S.C."/>
            <person name="DeBoy R.T."/>
            <person name="Durkin A.S."/>
            <person name="Gwinn M.L."/>
            <person name="Kolonay J.F."/>
            <person name="Sullivan S.A."/>
            <person name="Haft D.H."/>
            <person name="Selengut J."/>
            <person name="Davidsen T.M."/>
            <person name="Zafar N."/>
            <person name="White O."/>
            <person name="Tran B."/>
            <person name="Romero C."/>
            <person name="Forberger H.A."/>
            <person name="Weidman J.F."/>
            <person name="Khouri H.M."/>
            <person name="Feldblyum T.V."/>
            <person name="Utterback T.R."/>
            <person name="Van Aken S.E."/>
            <person name="Lovley D.R."/>
            <person name="Fraser C.M."/>
        </authorList>
    </citation>
    <scope>NUCLEOTIDE SEQUENCE [LARGE SCALE GENOMIC DNA]</scope>
    <source>
        <strain>ATCC 51573 / DSM 12127 / PCA</strain>
    </source>
</reference>
<sequence length="792" mass="90137">MSETEVPQNNIILASLDDLINWGRANSLWPMFFGLSCCFVEMMTSFTSRYDVSRFGAEVLRGTPREADLMVIAGTVFKKMAPSILRLYEQMAEPKWVISMGSCANSGGMYDVYSVVQGVNQIIPVDVHVPGCPPRPEAFLQGLMLLQEKIRREERPARKVLHLAGGSEGTTRPVLVDGVTKSRDTRGPGMEGIAIRGTSVQHPHFPMPRSDEMWRPPAPKHQFPDFGLAGELETAFGHRVVRDDHATDMLTYRCPPELLPDVLRHLKTRSAAPFRRLEDVACVDESCRRERSRFPDFTVNYHLLNFHIPGHLRIKAELRGDTPEIPSATSVFPAADWYEREAFDMYGIQFAGHPNLRRILMPPDWEGHPLRKNHPFRATEMHPYTTDDARRHQALPASDFFDRIDEETLILNLGPQHPGTHGIIRFVLKLDGEEIVDMDTDIGYHHRGAEKIGERQHWNQFIPYTDRIDYLAGVQNNLAYVNSVERLCGITVPDRGIAIRVMLAELFRIANHLVWLGTFAADVGAMTPVFYTFTDREKIFDIVEMVTGGRMHPSWFRIGGVADDLPEGWDGAVKAFLDWMPGRLKEYEDLLKGNPIFRERLKGVGVITGDEALEWGITGPNLRACGVEWDLRKKIPYNGYQHFHFEVPTEEGGDCWARYRVRIEEIRQSLHIVRQCWKEMPAGRWITDDYRYVLPKKRDALHDIESLIHHFINATRGMAPPKGENYSAIEAPKGENGYFVVSDGLNVPYRVRIKTPSFPHIQALPLMSRGWLVADFLAIIGSIDFVLADLDR</sequence>
<protein>
    <recommendedName>
        <fullName>NADH-quinone oxidoreductase subunit B/C/D</fullName>
        <ecNumber>7.1.1.-</ecNumber>
    </recommendedName>
    <alternativeName>
        <fullName>NADH dehydrogenase I subunit B/C/D</fullName>
    </alternativeName>
    <alternativeName>
        <fullName>NDH-1 subunit B/C/D</fullName>
    </alternativeName>
</protein>
<evidence type="ECO:0000250" key="1"/>
<evidence type="ECO:0000305" key="2"/>
<accession>Q746S4</accession>
<feature type="chain" id="PRO_0000358644" description="NADH-quinone oxidoreductase subunit B/C/D">
    <location>
        <begin position="1"/>
        <end position="792"/>
    </location>
</feature>
<feature type="region of interest" description="NADH dehydrogenase I subunit B" evidence="1">
    <location>
        <begin position="1"/>
        <end position="156"/>
    </location>
</feature>
<feature type="region of interest" description="NADH dehydrogenase I subunit C" evidence="1">
    <location>
        <begin position="230"/>
        <end position="385"/>
    </location>
</feature>
<feature type="region of interest" description="NADH dehydrogenase I subunit D" evidence="1">
    <location>
        <begin position="412"/>
        <end position="792"/>
    </location>
</feature>